<dbReference type="EMBL" id="Z14147">
    <property type="protein sequence ID" value="CAA78519.1"/>
    <property type="molecule type" value="Genomic_DNA"/>
</dbReference>
<dbReference type="PIR" id="S32432">
    <property type="entry name" value="S32432"/>
</dbReference>
<dbReference type="PDB" id="1CBY">
    <property type="method" value="X-ray"/>
    <property type="resolution" value="2.60 A"/>
    <property type="chains" value="A=1-259"/>
</dbReference>
<dbReference type="PDBsum" id="1CBY"/>
<dbReference type="SMR" id="Q04470"/>
<dbReference type="TCDB" id="1.C.71.1.2">
    <property type="family name" value="the cytolytic delta endotoxin (cyt1/2) family"/>
</dbReference>
<dbReference type="EvolutionaryTrace" id="Q04470"/>
<dbReference type="GO" id="GO:0005576">
    <property type="term" value="C:extracellular region"/>
    <property type="evidence" value="ECO:0007669"/>
    <property type="project" value="InterPro"/>
</dbReference>
<dbReference type="GO" id="GO:0090729">
    <property type="term" value="F:toxin activity"/>
    <property type="evidence" value="ECO:0007669"/>
    <property type="project" value="UniProtKB-KW"/>
</dbReference>
<dbReference type="GO" id="GO:0030435">
    <property type="term" value="P:sporulation resulting in formation of a cellular spore"/>
    <property type="evidence" value="ECO:0007669"/>
    <property type="project" value="UniProtKB-KW"/>
</dbReference>
<dbReference type="Gene3D" id="3.40.198.10">
    <property type="entry name" value="Delta-endotoxin CytB-like"/>
    <property type="match status" value="1"/>
</dbReference>
<dbReference type="InterPro" id="IPR035918">
    <property type="entry name" value="CytB_endotoxin-like_sf"/>
</dbReference>
<dbReference type="InterPro" id="IPR001615">
    <property type="entry name" value="Endotoxin_CytB"/>
</dbReference>
<dbReference type="Pfam" id="PF01338">
    <property type="entry name" value="Bac_thur_toxin"/>
    <property type="match status" value="1"/>
</dbReference>
<dbReference type="SUPFAM" id="SSF55676">
    <property type="entry name" value="CytB endotoxin-like"/>
    <property type="match status" value="1"/>
</dbReference>
<keyword id="KW-0002">3D-structure</keyword>
<keyword id="KW-0749">Sporulation</keyword>
<keyword id="KW-0800">Toxin</keyword>
<keyword id="KW-0843">Virulence</keyword>
<accession>Q04470</accession>
<proteinExistence type="evidence at protein level"/>
<reference key="1">
    <citation type="journal article" date="1993" name="J. Mol. Biol.">
        <title>Cloning and characterization of a novel Bacillus thuringiensis cytolytic delta-endotoxin.</title>
        <authorList>
            <person name="Koni P.A."/>
            <person name="Ellar D.J."/>
        </authorList>
    </citation>
    <scope>NUCLEOTIDE SEQUENCE [GENOMIC DNA]</scope>
</reference>
<reference key="2">
    <citation type="journal article" date="1996" name="J. Mol. Biol.">
        <title>Structure of the mosquitocidal delta-endotoxin CytB from Bacillus thuringiensis sp. kyushuensis and implications for membrane pore formation.</title>
        <authorList>
            <person name="Li J."/>
            <person name="Koni P.A."/>
            <person name="Ellar D.J."/>
        </authorList>
    </citation>
    <scope>X-RAY CRYSTALLOGRAPHY (2.6 ANGSTROMS)</scope>
</reference>
<protein>
    <recommendedName>
        <fullName>Type-2Aa cytolytic delta-endotoxin</fullName>
    </recommendedName>
    <alternativeName>
        <fullName>29 kDa cytolytic toxin</fullName>
    </alternativeName>
</protein>
<evidence type="ECO:0000305" key="1"/>
<evidence type="ECO:0007829" key="2">
    <source>
        <dbReference type="PDB" id="1CBY"/>
    </source>
</evidence>
<comment type="function">
    <text>Kills the larvae of dipteran insects by making pores in the epithelial cell membrane of the insect midgut.</text>
</comment>
<comment type="subunit">
    <text>Homodimer (protoxin) and monomer (active toxin).</text>
</comment>
<comment type="developmental stage">
    <text>The crystal protein is produced during sporulation and is accumulated both as an inclusion and as part of the spore coat.</text>
</comment>
<comment type="PTM">
    <text>Active after proteolytic processing.</text>
</comment>
<comment type="similarity">
    <text evidence="1">Belongs to the cyt1/cyt2 endotoxin family.</text>
</comment>
<name>CT2AA_BACTY</name>
<gene>
    <name type="primary">cyt2Aa1</name>
    <name type="synonym">cytB</name>
</gene>
<sequence length="259" mass="29235">MYTKNFSNSRMEVKGNNGCSAPIIRKPFKHIVLTVPSSDLDNFNTVFYVQPQYINQALHLANAFQGAIDPLNLNFNFEKALQIANGIPNSAIVKTLNQSVIQQTVEISVMVEQLKKIIQEVLGLVINSTSFWNSVEATIKGTFTNLDTQIDEAWIFWHSLSAHNTSYYYNILFSIQNEDTGAVMAVLPLAFEVSVDVEKQKVLFFTIKDSARYEVKMKALTLVQALHSSNAPIVDIFNVNNYNLYHSNHKIIQNLNLSN</sequence>
<organism>
    <name type="scientific">Bacillus thuringiensis subsp. kyushuensis</name>
    <dbReference type="NCBI Taxonomy" id="44161"/>
    <lineage>
        <taxon>Bacteria</taxon>
        <taxon>Bacillati</taxon>
        <taxon>Bacillota</taxon>
        <taxon>Bacilli</taxon>
        <taxon>Bacillales</taxon>
        <taxon>Bacillaceae</taxon>
        <taxon>Bacillus</taxon>
        <taxon>Bacillus cereus group</taxon>
    </lineage>
</organism>
<feature type="chain" id="PRO_0000174108" description="Type-2Aa cytolytic delta-endotoxin">
    <location>
        <begin position="1"/>
        <end position="259"/>
    </location>
</feature>
<feature type="strand" evidence="2">
    <location>
        <begin position="44"/>
        <end position="48"/>
    </location>
</feature>
<feature type="helix" evidence="2">
    <location>
        <begin position="51"/>
        <end position="53"/>
    </location>
</feature>
<feature type="helix" evidence="2">
    <location>
        <begin position="54"/>
        <end position="63"/>
    </location>
</feature>
<feature type="helix" evidence="2">
    <location>
        <begin position="64"/>
        <end position="67"/>
    </location>
</feature>
<feature type="turn" evidence="2">
    <location>
        <begin position="70"/>
        <end position="72"/>
    </location>
</feature>
<feature type="helix" evidence="2">
    <location>
        <begin position="77"/>
        <end position="84"/>
    </location>
</feature>
<feature type="strand" evidence="2">
    <location>
        <begin position="90"/>
        <end position="106"/>
    </location>
</feature>
<feature type="helix" evidence="2">
    <location>
        <begin position="107"/>
        <end position="122"/>
    </location>
</feature>
<feature type="helix" evidence="2">
    <location>
        <begin position="129"/>
        <end position="141"/>
    </location>
</feature>
<feature type="helix" evidence="2">
    <location>
        <begin position="146"/>
        <end position="149"/>
    </location>
</feature>
<feature type="strand" evidence="2">
    <location>
        <begin position="155"/>
        <end position="159"/>
    </location>
</feature>
<feature type="strand" evidence="2">
    <location>
        <begin position="165"/>
        <end position="175"/>
    </location>
</feature>
<feature type="turn" evidence="2">
    <location>
        <begin position="178"/>
        <end position="182"/>
    </location>
</feature>
<feature type="strand" evidence="2">
    <location>
        <begin position="183"/>
        <end position="197"/>
    </location>
</feature>
<feature type="helix" evidence="2">
    <location>
        <begin position="199"/>
        <end position="202"/>
    </location>
</feature>
<feature type="strand" evidence="2">
    <location>
        <begin position="210"/>
        <end position="225"/>
    </location>
</feature>
<feature type="helix" evidence="2">
    <location>
        <begin position="233"/>
        <end position="237"/>
    </location>
</feature>
<feature type="strand" evidence="2">
    <location>
        <begin position="241"/>
        <end position="243"/>
    </location>
</feature>